<protein>
    <recommendedName>
        <fullName evidence="1">Large ribosomal subunit protein bL21</fullName>
    </recommendedName>
    <alternativeName>
        <fullName evidence="3">50S ribosomal protein L21</fullName>
    </alternativeName>
</protein>
<sequence length="102" mass="11290">MFAIIETGGKQVKVEEGQEIFVEKLDVNEGDSFTFDKVLFVGGDAVKVGAPTVEGASVTATVQKQGRGKKITVFTYKRRKDSKRKKGHRQPYTKLTIDKINA</sequence>
<evidence type="ECO:0000255" key="1">
    <source>
        <dbReference type="HAMAP-Rule" id="MF_01363"/>
    </source>
</evidence>
<evidence type="ECO:0000256" key="2">
    <source>
        <dbReference type="SAM" id="MobiDB-lite"/>
    </source>
</evidence>
<evidence type="ECO:0000305" key="3"/>
<reference key="1">
    <citation type="journal article" date="2005" name="Proc. Natl. Acad. Sci. U.S.A.">
        <title>Whole genome sequence of Staphylococcus saprophyticus reveals the pathogenesis of uncomplicated urinary tract infection.</title>
        <authorList>
            <person name="Kuroda M."/>
            <person name="Yamashita A."/>
            <person name="Hirakawa H."/>
            <person name="Kumano M."/>
            <person name="Morikawa K."/>
            <person name="Higashide M."/>
            <person name="Maruyama A."/>
            <person name="Inose Y."/>
            <person name="Matoba K."/>
            <person name="Toh H."/>
            <person name="Kuhara S."/>
            <person name="Hattori M."/>
            <person name="Ohta T."/>
        </authorList>
    </citation>
    <scope>NUCLEOTIDE SEQUENCE [LARGE SCALE GENOMIC DNA]</scope>
    <source>
        <strain>ATCC 15305 / DSM 20229 / NCIMB 8711 / NCTC 7292 / S-41</strain>
    </source>
</reference>
<accession>Q49Y85</accession>
<comment type="function">
    <text evidence="1">This protein binds to 23S rRNA in the presence of protein L20.</text>
</comment>
<comment type="subunit">
    <text evidence="1">Part of the 50S ribosomal subunit. Contacts protein L20.</text>
</comment>
<comment type="similarity">
    <text evidence="1">Belongs to the bacterial ribosomal protein bL21 family.</text>
</comment>
<dbReference type="EMBL" id="AP008934">
    <property type="protein sequence ID" value="BAE18257.1"/>
    <property type="molecule type" value="Genomic_DNA"/>
</dbReference>
<dbReference type="RefSeq" id="WP_011302944.1">
    <property type="nucleotide sequence ID" value="NZ_MTGA01000038.1"/>
</dbReference>
<dbReference type="SMR" id="Q49Y85"/>
<dbReference type="GeneID" id="66867344"/>
<dbReference type="KEGG" id="ssp:SSP1112"/>
<dbReference type="eggNOG" id="COG0261">
    <property type="taxonomic scope" value="Bacteria"/>
</dbReference>
<dbReference type="HOGENOM" id="CLU_061463_3_2_9"/>
<dbReference type="OrthoDB" id="9813334at2"/>
<dbReference type="Proteomes" id="UP000006371">
    <property type="component" value="Chromosome"/>
</dbReference>
<dbReference type="GO" id="GO:0005737">
    <property type="term" value="C:cytoplasm"/>
    <property type="evidence" value="ECO:0007669"/>
    <property type="project" value="UniProtKB-ARBA"/>
</dbReference>
<dbReference type="GO" id="GO:1990904">
    <property type="term" value="C:ribonucleoprotein complex"/>
    <property type="evidence" value="ECO:0007669"/>
    <property type="project" value="UniProtKB-KW"/>
</dbReference>
<dbReference type="GO" id="GO:0005840">
    <property type="term" value="C:ribosome"/>
    <property type="evidence" value="ECO:0007669"/>
    <property type="project" value="UniProtKB-KW"/>
</dbReference>
<dbReference type="GO" id="GO:0019843">
    <property type="term" value="F:rRNA binding"/>
    <property type="evidence" value="ECO:0007669"/>
    <property type="project" value="UniProtKB-UniRule"/>
</dbReference>
<dbReference type="GO" id="GO:0003735">
    <property type="term" value="F:structural constituent of ribosome"/>
    <property type="evidence" value="ECO:0007669"/>
    <property type="project" value="InterPro"/>
</dbReference>
<dbReference type="GO" id="GO:0006412">
    <property type="term" value="P:translation"/>
    <property type="evidence" value="ECO:0007669"/>
    <property type="project" value="UniProtKB-UniRule"/>
</dbReference>
<dbReference type="HAMAP" id="MF_01363">
    <property type="entry name" value="Ribosomal_bL21"/>
    <property type="match status" value="1"/>
</dbReference>
<dbReference type="InterPro" id="IPR028909">
    <property type="entry name" value="bL21-like"/>
</dbReference>
<dbReference type="InterPro" id="IPR036164">
    <property type="entry name" value="bL21-like_sf"/>
</dbReference>
<dbReference type="InterPro" id="IPR001787">
    <property type="entry name" value="Ribosomal_bL21"/>
</dbReference>
<dbReference type="NCBIfam" id="TIGR00061">
    <property type="entry name" value="L21"/>
    <property type="match status" value="1"/>
</dbReference>
<dbReference type="PANTHER" id="PTHR21349">
    <property type="entry name" value="50S RIBOSOMAL PROTEIN L21"/>
    <property type="match status" value="1"/>
</dbReference>
<dbReference type="PANTHER" id="PTHR21349:SF0">
    <property type="entry name" value="LARGE RIBOSOMAL SUBUNIT PROTEIN BL21M"/>
    <property type="match status" value="1"/>
</dbReference>
<dbReference type="Pfam" id="PF00829">
    <property type="entry name" value="Ribosomal_L21p"/>
    <property type="match status" value="1"/>
</dbReference>
<dbReference type="SUPFAM" id="SSF141091">
    <property type="entry name" value="L21p-like"/>
    <property type="match status" value="1"/>
</dbReference>
<gene>
    <name evidence="1" type="primary">rplU</name>
    <name type="ordered locus">SSP1112</name>
</gene>
<feature type="chain" id="PRO_0000224942" description="Large ribosomal subunit protein bL21">
    <location>
        <begin position="1"/>
        <end position="102"/>
    </location>
</feature>
<feature type="region of interest" description="Disordered" evidence="2">
    <location>
        <begin position="79"/>
        <end position="102"/>
    </location>
</feature>
<feature type="compositionally biased region" description="Basic residues" evidence="2">
    <location>
        <begin position="79"/>
        <end position="91"/>
    </location>
</feature>
<keyword id="KW-1185">Reference proteome</keyword>
<keyword id="KW-0687">Ribonucleoprotein</keyword>
<keyword id="KW-0689">Ribosomal protein</keyword>
<keyword id="KW-0694">RNA-binding</keyword>
<keyword id="KW-0699">rRNA-binding</keyword>
<proteinExistence type="inferred from homology"/>
<name>RL21_STAS1</name>
<organism>
    <name type="scientific">Staphylococcus saprophyticus subsp. saprophyticus (strain ATCC 15305 / DSM 20229 / NCIMB 8711 / NCTC 7292 / S-41)</name>
    <dbReference type="NCBI Taxonomy" id="342451"/>
    <lineage>
        <taxon>Bacteria</taxon>
        <taxon>Bacillati</taxon>
        <taxon>Bacillota</taxon>
        <taxon>Bacilli</taxon>
        <taxon>Bacillales</taxon>
        <taxon>Staphylococcaceae</taxon>
        <taxon>Staphylococcus</taxon>
    </lineage>
</organism>